<protein>
    <recommendedName>
        <fullName evidence="1">Large ribosomal subunit protein uL4</fullName>
    </recommendedName>
    <alternativeName>
        <fullName evidence="3">50S ribosomal protein L4</fullName>
    </alternativeName>
</protein>
<dbReference type="EMBL" id="AP009247">
    <property type="protein sequence ID" value="BAF61300.1"/>
    <property type="molecule type" value="Genomic_DNA"/>
</dbReference>
<dbReference type="RefSeq" id="WP_011929570.1">
    <property type="nucleotide sequence ID" value="NC_009465.1"/>
</dbReference>
<dbReference type="SMR" id="A5CXK5"/>
<dbReference type="STRING" id="412965.COSY_0170"/>
<dbReference type="KEGG" id="vok:COSY_0170"/>
<dbReference type="eggNOG" id="COG0088">
    <property type="taxonomic scope" value="Bacteria"/>
</dbReference>
<dbReference type="HOGENOM" id="CLU_041575_5_2_6"/>
<dbReference type="OrthoDB" id="9803201at2"/>
<dbReference type="Proteomes" id="UP000000247">
    <property type="component" value="Chromosome"/>
</dbReference>
<dbReference type="GO" id="GO:1990904">
    <property type="term" value="C:ribonucleoprotein complex"/>
    <property type="evidence" value="ECO:0007669"/>
    <property type="project" value="UniProtKB-KW"/>
</dbReference>
<dbReference type="GO" id="GO:0005840">
    <property type="term" value="C:ribosome"/>
    <property type="evidence" value="ECO:0007669"/>
    <property type="project" value="UniProtKB-KW"/>
</dbReference>
<dbReference type="GO" id="GO:0019843">
    <property type="term" value="F:rRNA binding"/>
    <property type="evidence" value="ECO:0007669"/>
    <property type="project" value="UniProtKB-UniRule"/>
</dbReference>
<dbReference type="GO" id="GO:0003735">
    <property type="term" value="F:structural constituent of ribosome"/>
    <property type="evidence" value="ECO:0007669"/>
    <property type="project" value="InterPro"/>
</dbReference>
<dbReference type="GO" id="GO:0006412">
    <property type="term" value="P:translation"/>
    <property type="evidence" value="ECO:0007669"/>
    <property type="project" value="UniProtKB-UniRule"/>
</dbReference>
<dbReference type="Gene3D" id="3.40.1370.10">
    <property type="match status" value="1"/>
</dbReference>
<dbReference type="HAMAP" id="MF_01328_B">
    <property type="entry name" value="Ribosomal_uL4_B"/>
    <property type="match status" value="1"/>
</dbReference>
<dbReference type="InterPro" id="IPR002136">
    <property type="entry name" value="Ribosomal_uL4"/>
</dbReference>
<dbReference type="InterPro" id="IPR013005">
    <property type="entry name" value="Ribosomal_uL4-like"/>
</dbReference>
<dbReference type="InterPro" id="IPR023574">
    <property type="entry name" value="Ribosomal_uL4_dom_sf"/>
</dbReference>
<dbReference type="NCBIfam" id="TIGR03953">
    <property type="entry name" value="rplD_bact"/>
    <property type="match status" value="1"/>
</dbReference>
<dbReference type="PANTHER" id="PTHR10746">
    <property type="entry name" value="50S RIBOSOMAL PROTEIN L4"/>
    <property type="match status" value="1"/>
</dbReference>
<dbReference type="PANTHER" id="PTHR10746:SF6">
    <property type="entry name" value="LARGE RIBOSOMAL SUBUNIT PROTEIN UL4M"/>
    <property type="match status" value="1"/>
</dbReference>
<dbReference type="Pfam" id="PF00573">
    <property type="entry name" value="Ribosomal_L4"/>
    <property type="match status" value="1"/>
</dbReference>
<dbReference type="SUPFAM" id="SSF52166">
    <property type="entry name" value="Ribosomal protein L4"/>
    <property type="match status" value="1"/>
</dbReference>
<name>RL4_VESOH</name>
<proteinExistence type="inferred from homology"/>
<reference key="1">
    <citation type="journal article" date="2007" name="Curr. Biol.">
        <title>Reduced genome of the thioautotrophic intracellular symbiont in a deep-sea clam, Calyptogena okutanii.</title>
        <authorList>
            <person name="Kuwahara H."/>
            <person name="Yoshida T."/>
            <person name="Takaki Y."/>
            <person name="Shimamura S."/>
            <person name="Nishi S."/>
            <person name="Harada M."/>
            <person name="Matsuyama K."/>
            <person name="Takishita K."/>
            <person name="Kawato M."/>
            <person name="Uematsu K."/>
            <person name="Fujiwara Y."/>
            <person name="Sato T."/>
            <person name="Kato C."/>
            <person name="Kitagawa M."/>
            <person name="Kato I."/>
            <person name="Maruyama T."/>
        </authorList>
    </citation>
    <scope>NUCLEOTIDE SEQUENCE [LARGE SCALE GENOMIC DNA]</scope>
    <source>
        <strain>HA</strain>
    </source>
</reference>
<gene>
    <name evidence="1" type="primary">rplD</name>
    <name type="ordered locus">COSY_0170</name>
</gene>
<organism>
    <name type="scientific">Vesicomyosocius okutanii subsp. Calyptogena okutanii (strain HA)</name>
    <dbReference type="NCBI Taxonomy" id="412965"/>
    <lineage>
        <taxon>Bacteria</taxon>
        <taxon>Pseudomonadati</taxon>
        <taxon>Pseudomonadota</taxon>
        <taxon>Gammaproteobacteria</taxon>
        <taxon>Candidatus Pseudothioglobaceae</taxon>
        <taxon>Candidatus Vesicomyosocius</taxon>
    </lineage>
</organism>
<evidence type="ECO:0000255" key="1">
    <source>
        <dbReference type="HAMAP-Rule" id="MF_01328"/>
    </source>
</evidence>
<evidence type="ECO:0000256" key="2">
    <source>
        <dbReference type="SAM" id="MobiDB-lite"/>
    </source>
</evidence>
<evidence type="ECO:0000305" key="3"/>
<sequence length="204" mass="22653">MELKVLNISLNSLNTVEVDDTIFARDFNQALVHQVTTAYMSGSRQGSKAQKNRSAVSGGGKRPWAQKGTGRARAGTTRGPIWRSGGVTFATQPRSYAQKVNKKMYKGAISIIFSELVRSERLKVVKEFDIKEVKTKNMIALLKVLNVKDALLMTDELDENLYLSSRNLYHVGVCDTQSIDPVSLIGYDNVVVTELALKKIEVML</sequence>
<accession>A5CXK5</accession>
<feature type="chain" id="PRO_1000052525" description="Large ribosomal subunit protein uL4">
    <location>
        <begin position="1"/>
        <end position="204"/>
    </location>
</feature>
<feature type="region of interest" description="Disordered" evidence="2">
    <location>
        <begin position="42"/>
        <end position="85"/>
    </location>
</feature>
<feature type="compositionally biased region" description="Polar residues" evidence="2">
    <location>
        <begin position="42"/>
        <end position="55"/>
    </location>
</feature>
<feature type="compositionally biased region" description="Low complexity" evidence="2">
    <location>
        <begin position="68"/>
        <end position="79"/>
    </location>
</feature>
<comment type="function">
    <text evidence="1">One of the primary rRNA binding proteins, this protein initially binds near the 5'-end of the 23S rRNA. It is important during the early stages of 50S assembly. It makes multiple contacts with different domains of the 23S rRNA in the assembled 50S subunit and ribosome.</text>
</comment>
<comment type="function">
    <text evidence="1">Forms part of the polypeptide exit tunnel.</text>
</comment>
<comment type="subunit">
    <text evidence="1">Part of the 50S ribosomal subunit.</text>
</comment>
<comment type="similarity">
    <text evidence="1">Belongs to the universal ribosomal protein uL4 family.</text>
</comment>
<keyword id="KW-1185">Reference proteome</keyword>
<keyword id="KW-0687">Ribonucleoprotein</keyword>
<keyword id="KW-0689">Ribosomal protein</keyword>
<keyword id="KW-0694">RNA-binding</keyword>
<keyword id="KW-0699">rRNA-binding</keyword>